<protein>
    <recommendedName>
        <fullName evidence="1">Large ribosomal subunit protein bL25</fullName>
    </recommendedName>
    <alternativeName>
        <fullName evidence="2">50S ribosomal protein L25</fullName>
    </alternativeName>
    <alternativeName>
        <fullName evidence="1">General stress protein CTC</fullName>
    </alternativeName>
</protein>
<proteinExistence type="inferred from homology"/>
<accession>Q74FE7</accession>
<organism>
    <name type="scientific">Geobacter sulfurreducens (strain ATCC 51573 / DSM 12127 / PCA)</name>
    <dbReference type="NCBI Taxonomy" id="243231"/>
    <lineage>
        <taxon>Bacteria</taxon>
        <taxon>Pseudomonadati</taxon>
        <taxon>Thermodesulfobacteriota</taxon>
        <taxon>Desulfuromonadia</taxon>
        <taxon>Geobacterales</taxon>
        <taxon>Geobacteraceae</taxon>
        <taxon>Geobacter</taxon>
    </lineage>
</organism>
<gene>
    <name evidence="1" type="primary">rplY</name>
    <name evidence="1" type="synonym">ctc</name>
    <name type="ordered locus">GSU0662</name>
</gene>
<sequence>MEQKTMSIELREKNGKGVARKLRAQDVVPGVVYGKGIEPVSVKVAAKDLAATIAGEGGLNSLITLSGGGSLNGNIVIVADMQRNPLKGDILHVDFHRISLDEKVKVHVPLVMVGTAAGVKEGGMLDVVTYSLDVECLPTAIPEAINVDVTNLAIGHSIHVSELVLPAGIKVLNDPETPIVSIHGKAKEEAPAAE</sequence>
<keyword id="KW-1185">Reference proteome</keyword>
<keyword id="KW-0687">Ribonucleoprotein</keyword>
<keyword id="KW-0689">Ribosomal protein</keyword>
<keyword id="KW-0694">RNA-binding</keyword>
<keyword id="KW-0699">rRNA-binding</keyword>
<comment type="function">
    <text evidence="1">This is one of the proteins that binds to the 5S RNA in the ribosome where it forms part of the central protuberance.</text>
</comment>
<comment type="subunit">
    <text evidence="1">Part of the 50S ribosomal subunit; part of the 5S rRNA/L5/L18/L25 subcomplex. Contacts the 5S rRNA. Binds to the 5S rRNA independently of L5 and L18.</text>
</comment>
<comment type="similarity">
    <text evidence="1">Belongs to the bacterial ribosomal protein bL25 family. CTC subfamily.</text>
</comment>
<evidence type="ECO:0000255" key="1">
    <source>
        <dbReference type="HAMAP-Rule" id="MF_01334"/>
    </source>
</evidence>
<evidence type="ECO:0000305" key="2"/>
<name>RL25_GEOSL</name>
<feature type="chain" id="PRO_0000181550" description="Large ribosomal subunit protein bL25">
    <location>
        <begin position="1"/>
        <end position="194"/>
    </location>
</feature>
<reference key="1">
    <citation type="journal article" date="2003" name="Science">
        <title>Genome of Geobacter sulfurreducens: metal reduction in subsurface environments.</title>
        <authorList>
            <person name="Methe B.A."/>
            <person name="Nelson K.E."/>
            <person name="Eisen J.A."/>
            <person name="Paulsen I.T."/>
            <person name="Nelson W.C."/>
            <person name="Heidelberg J.F."/>
            <person name="Wu D."/>
            <person name="Wu M."/>
            <person name="Ward N.L."/>
            <person name="Beanan M.J."/>
            <person name="Dodson R.J."/>
            <person name="Madupu R."/>
            <person name="Brinkac L.M."/>
            <person name="Daugherty S.C."/>
            <person name="DeBoy R.T."/>
            <person name="Durkin A.S."/>
            <person name="Gwinn M.L."/>
            <person name="Kolonay J.F."/>
            <person name="Sullivan S.A."/>
            <person name="Haft D.H."/>
            <person name="Selengut J."/>
            <person name="Davidsen T.M."/>
            <person name="Zafar N."/>
            <person name="White O."/>
            <person name="Tran B."/>
            <person name="Romero C."/>
            <person name="Forberger H.A."/>
            <person name="Weidman J.F."/>
            <person name="Khouri H.M."/>
            <person name="Feldblyum T.V."/>
            <person name="Utterback T.R."/>
            <person name="Van Aken S.E."/>
            <person name="Lovley D.R."/>
            <person name="Fraser C.M."/>
        </authorList>
    </citation>
    <scope>NUCLEOTIDE SEQUENCE [LARGE SCALE GENOMIC DNA]</scope>
    <source>
        <strain>ATCC 51573 / DSM 12127 / PCA</strain>
    </source>
</reference>
<dbReference type="EMBL" id="AE017180">
    <property type="protein sequence ID" value="AAR33992.1"/>
    <property type="molecule type" value="Genomic_DNA"/>
</dbReference>
<dbReference type="RefSeq" id="NP_951719.1">
    <property type="nucleotide sequence ID" value="NC_002939.5"/>
</dbReference>
<dbReference type="RefSeq" id="WP_010941323.1">
    <property type="nucleotide sequence ID" value="NC_002939.5"/>
</dbReference>
<dbReference type="SMR" id="Q74FE7"/>
<dbReference type="STRING" id="243231.GSU0662"/>
<dbReference type="DNASU" id="2685482"/>
<dbReference type="EnsemblBacteria" id="AAR33992">
    <property type="protein sequence ID" value="AAR33992"/>
    <property type="gene ID" value="GSU0662"/>
</dbReference>
<dbReference type="KEGG" id="gsu:GSU0662"/>
<dbReference type="PATRIC" id="fig|243231.5.peg.658"/>
<dbReference type="eggNOG" id="COG1825">
    <property type="taxonomic scope" value="Bacteria"/>
</dbReference>
<dbReference type="HOGENOM" id="CLU_075939_2_1_7"/>
<dbReference type="InParanoid" id="Q74FE7"/>
<dbReference type="OrthoDB" id="9786489at2"/>
<dbReference type="Proteomes" id="UP000000577">
    <property type="component" value="Chromosome"/>
</dbReference>
<dbReference type="GO" id="GO:0022625">
    <property type="term" value="C:cytosolic large ribosomal subunit"/>
    <property type="evidence" value="ECO:0000318"/>
    <property type="project" value="GO_Central"/>
</dbReference>
<dbReference type="GO" id="GO:0008097">
    <property type="term" value="F:5S rRNA binding"/>
    <property type="evidence" value="ECO:0000318"/>
    <property type="project" value="GO_Central"/>
</dbReference>
<dbReference type="GO" id="GO:0003735">
    <property type="term" value="F:structural constituent of ribosome"/>
    <property type="evidence" value="ECO:0007669"/>
    <property type="project" value="InterPro"/>
</dbReference>
<dbReference type="GO" id="GO:0006412">
    <property type="term" value="P:translation"/>
    <property type="evidence" value="ECO:0000318"/>
    <property type="project" value="GO_Central"/>
</dbReference>
<dbReference type="CDD" id="cd00495">
    <property type="entry name" value="Ribosomal_L25_TL5_CTC"/>
    <property type="match status" value="1"/>
</dbReference>
<dbReference type="FunFam" id="2.170.120.20:FF:000003">
    <property type="entry name" value="50S ribosomal protein L25"/>
    <property type="match status" value="1"/>
</dbReference>
<dbReference type="FunFam" id="2.40.240.10:FF:000043">
    <property type="entry name" value="50S ribosomal protein L25"/>
    <property type="match status" value="1"/>
</dbReference>
<dbReference type="Gene3D" id="2.170.120.20">
    <property type="entry name" value="Ribosomal protein L25, beta domain"/>
    <property type="match status" value="1"/>
</dbReference>
<dbReference type="Gene3D" id="2.40.240.10">
    <property type="entry name" value="Ribosomal Protein L25, Chain P"/>
    <property type="match status" value="1"/>
</dbReference>
<dbReference type="HAMAP" id="MF_01334">
    <property type="entry name" value="Ribosomal_bL25_CTC"/>
    <property type="match status" value="1"/>
</dbReference>
<dbReference type="InterPro" id="IPR020056">
    <property type="entry name" value="Rbsml_bL25/Gln-tRNA_synth_N"/>
</dbReference>
<dbReference type="InterPro" id="IPR011035">
    <property type="entry name" value="Ribosomal_bL25/Gln-tRNA_synth"/>
</dbReference>
<dbReference type="InterPro" id="IPR020057">
    <property type="entry name" value="Ribosomal_bL25_b-dom"/>
</dbReference>
<dbReference type="InterPro" id="IPR037121">
    <property type="entry name" value="Ribosomal_bL25_C"/>
</dbReference>
<dbReference type="InterPro" id="IPR001021">
    <property type="entry name" value="Ribosomal_bL25_long"/>
</dbReference>
<dbReference type="InterPro" id="IPR029751">
    <property type="entry name" value="Ribosomal_L25_dom"/>
</dbReference>
<dbReference type="InterPro" id="IPR020930">
    <property type="entry name" value="Ribosomal_uL5_bac-type"/>
</dbReference>
<dbReference type="NCBIfam" id="TIGR00731">
    <property type="entry name" value="bL25_bact_ctc"/>
    <property type="match status" value="1"/>
</dbReference>
<dbReference type="PANTHER" id="PTHR33284">
    <property type="entry name" value="RIBOSOMAL PROTEIN L25/GLN-TRNA SYNTHETASE, ANTI-CODON-BINDING DOMAIN-CONTAINING PROTEIN"/>
    <property type="match status" value="1"/>
</dbReference>
<dbReference type="PANTHER" id="PTHR33284:SF1">
    <property type="entry name" value="RIBOSOMAL PROTEIN L25_GLN-TRNA SYNTHETASE, ANTI-CODON-BINDING DOMAIN-CONTAINING PROTEIN"/>
    <property type="match status" value="1"/>
</dbReference>
<dbReference type="Pfam" id="PF01386">
    <property type="entry name" value="Ribosomal_L25p"/>
    <property type="match status" value="1"/>
</dbReference>
<dbReference type="Pfam" id="PF14693">
    <property type="entry name" value="Ribosomal_TL5_C"/>
    <property type="match status" value="1"/>
</dbReference>
<dbReference type="SUPFAM" id="SSF50715">
    <property type="entry name" value="Ribosomal protein L25-like"/>
    <property type="match status" value="1"/>
</dbReference>